<organism>
    <name type="scientific">Streptococcus agalactiae serotype III (strain NEM316)</name>
    <dbReference type="NCBI Taxonomy" id="211110"/>
    <lineage>
        <taxon>Bacteria</taxon>
        <taxon>Bacillati</taxon>
        <taxon>Bacillota</taxon>
        <taxon>Bacilli</taxon>
        <taxon>Lactobacillales</taxon>
        <taxon>Streptococcaceae</taxon>
        <taxon>Streptococcus</taxon>
    </lineage>
</organism>
<feature type="chain" id="PRO_0000176348" description="Elongation factor 4">
    <location>
        <begin position="1"/>
        <end position="610"/>
    </location>
</feature>
<feature type="domain" description="tr-type G">
    <location>
        <begin position="11"/>
        <end position="193"/>
    </location>
</feature>
<feature type="binding site" evidence="1">
    <location>
        <begin position="23"/>
        <end position="28"/>
    </location>
    <ligand>
        <name>GTP</name>
        <dbReference type="ChEBI" id="CHEBI:37565"/>
    </ligand>
</feature>
<feature type="binding site" evidence="1">
    <location>
        <begin position="140"/>
        <end position="143"/>
    </location>
    <ligand>
        <name>GTP</name>
        <dbReference type="ChEBI" id="CHEBI:37565"/>
    </ligand>
</feature>
<gene>
    <name evidence="1" type="primary">lepA</name>
    <name type="ordered locus">gbs0917</name>
</gene>
<proteinExistence type="inferred from homology"/>
<evidence type="ECO:0000255" key="1">
    <source>
        <dbReference type="HAMAP-Rule" id="MF_00071"/>
    </source>
</evidence>
<accession>P65273</accession>
<accession>Q8E030</accession>
<accession>Q8E5R3</accession>
<dbReference type="EC" id="3.6.5.n1" evidence="1"/>
<dbReference type="EMBL" id="AL766848">
    <property type="protein sequence ID" value="CAD46576.1"/>
    <property type="molecule type" value="Genomic_DNA"/>
</dbReference>
<dbReference type="RefSeq" id="WP_001019133.1">
    <property type="nucleotide sequence ID" value="NC_004368.1"/>
</dbReference>
<dbReference type="SMR" id="P65273"/>
<dbReference type="KEGG" id="san:gbs0917"/>
<dbReference type="eggNOG" id="COG0481">
    <property type="taxonomic scope" value="Bacteria"/>
</dbReference>
<dbReference type="HOGENOM" id="CLU_009995_3_3_9"/>
<dbReference type="Proteomes" id="UP000000823">
    <property type="component" value="Chromosome"/>
</dbReference>
<dbReference type="GO" id="GO:0005886">
    <property type="term" value="C:plasma membrane"/>
    <property type="evidence" value="ECO:0007669"/>
    <property type="project" value="UniProtKB-SubCell"/>
</dbReference>
<dbReference type="GO" id="GO:0005525">
    <property type="term" value="F:GTP binding"/>
    <property type="evidence" value="ECO:0007669"/>
    <property type="project" value="UniProtKB-UniRule"/>
</dbReference>
<dbReference type="GO" id="GO:0003924">
    <property type="term" value="F:GTPase activity"/>
    <property type="evidence" value="ECO:0007669"/>
    <property type="project" value="UniProtKB-UniRule"/>
</dbReference>
<dbReference type="GO" id="GO:0043022">
    <property type="term" value="F:ribosome binding"/>
    <property type="evidence" value="ECO:0007669"/>
    <property type="project" value="UniProtKB-UniRule"/>
</dbReference>
<dbReference type="GO" id="GO:0003746">
    <property type="term" value="F:translation elongation factor activity"/>
    <property type="evidence" value="ECO:0007669"/>
    <property type="project" value="UniProtKB-UniRule"/>
</dbReference>
<dbReference type="GO" id="GO:0045727">
    <property type="term" value="P:positive regulation of translation"/>
    <property type="evidence" value="ECO:0007669"/>
    <property type="project" value="UniProtKB-UniRule"/>
</dbReference>
<dbReference type="CDD" id="cd03699">
    <property type="entry name" value="EF4_II"/>
    <property type="match status" value="1"/>
</dbReference>
<dbReference type="CDD" id="cd16260">
    <property type="entry name" value="EF4_III"/>
    <property type="match status" value="1"/>
</dbReference>
<dbReference type="CDD" id="cd01890">
    <property type="entry name" value="LepA"/>
    <property type="match status" value="1"/>
</dbReference>
<dbReference type="CDD" id="cd03709">
    <property type="entry name" value="lepA_C"/>
    <property type="match status" value="1"/>
</dbReference>
<dbReference type="FunFam" id="3.40.50.300:FF:000078">
    <property type="entry name" value="Elongation factor 4"/>
    <property type="match status" value="1"/>
</dbReference>
<dbReference type="FunFam" id="2.40.30.10:FF:000015">
    <property type="entry name" value="Translation factor GUF1, mitochondrial"/>
    <property type="match status" value="1"/>
</dbReference>
<dbReference type="FunFam" id="3.30.70.240:FF:000007">
    <property type="entry name" value="Translation factor GUF1, mitochondrial"/>
    <property type="match status" value="1"/>
</dbReference>
<dbReference type="FunFam" id="3.30.70.2570:FF:000001">
    <property type="entry name" value="Translation factor GUF1, mitochondrial"/>
    <property type="match status" value="1"/>
</dbReference>
<dbReference type="FunFam" id="3.30.70.870:FF:000004">
    <property type="entry name" value="Translation factor GUF1, mitochondrial"/>
    <property type="match status" value="1"/>
</dbReference>
<dbReference type="Gene3D" id="3.30.70.240">
    <property type="match status" value="1"/>
</dbReference>
<dbReference type="Gene3D" id="3.30.70.2570">
    <property type="entry name" value="Elongation factor 4, C-terminal domain"/>
    <property type="match status" value="1"/>
</dbReference>
<dbReference type="Gene3D" id="3.30.70.870">
    <property type="entry name" value="Elongation Factor G (Translational Gtpase), domain 3"/>
    <property type="match status" value="1"/>
</dbReference>
<dbReference type="Gene3D" id="3.40.50.300">
    <property type="entry name" value="P-loop containing nucleotide triphosphate hydrolases"/>
    <property type="match status" value="1"/>
</dbReference>
<dbReference type="Gene3D" id="2.40.30.10">
    <property type="entry name" value="Translation factors"/>
    <property type="match status" value="1"/>
</dbReference>
<dbReference type="HAMAP" id="MF_00071">
    <property type="entry name" value="LepA"/>
    <property type="match status" value="1"/>
</dbReference>
<dbReference type="InterPro" id="IPR006297">
    <property type="entry name" value="EF-4"/>
</dbReference>
<dbReference type="InterPro" id="IPR035647">
    <property type="entry name" value="EFG_III/V"/>
</dbReference>
<dbReference type="InterPro" id="IPR000640">
    <property type="entry name" value="EFG_V-like"/>
</dbReference>
<dbReference type="InterPro" id="IPR004161">
    <property type="entry name" value="EFTu-like_2"/>
</dbReference>
<dbReference type="InterPro" id="IPR031157">
    <property type="entry name" value="G_TR_CS"/>
</dbReference>
<dbReference type="InterPro" id="IPR038363">
    <property type="entry name" value="LepA_C_sf"/>
</dbReference>
<dbReference type="InterPro" id="IPR013842">
    <property type="entry name" value="LepA_CTD"/>
</dbReference>
<dbReference type="InterPro" id="IPR035654">
    <property type="entry name" value="LepA_IV"/>
</dbReference>
<dbReference type="InterPro" id="IPR027417">
    <property type="entry name" value="P-loop_NTPase"/>
</dbReference>
<dbReference type="InterPro" id="IPR005225">
    <property type="entry name" value="Small_GTP-bd"/>
</dbReference>
<dbReference type="InterPro" id="IPR000795">
    <property type="entry name" value="T_Tr_GTP-bd_dom"/>
</dbReference>
<dbReference type="NCBIfam" id="TIGR01393">
    <property type="entry name" value="lepA"/>
    <property type="match status" value="1"/>
</dbReference>
<dbReference type="NCBIfam" id="TIGR00231">
    <property type="entry name" value="small_GTP"/>
    <property type="match status" value="1"/>
</dbReference>
<dbReference type="PANTHER" id="PTHR43512:SF4">
    <property type="entry name" value="TRANSLATION FACTOR GUF1 HOMOLOG, CHLOROPLASTIC"/>
    <property type="match status" value="1"/>
</dbReference>
<dbReference type="PANTHER" id="PTHR43512">
    <property type="entry name" value="TRANSLATION FACTOR GUF1-RELATED"/>
    <property type="match status" value="1"/>
</dbReference>
<dbReference type="Pfam" id="PF00679">
    <property type="entry name" value="EFG_C"/>
    <property type="match status" value="1"/>
</dbReference>
<dbReference type="Pfam" id="PF00009">
    <property type="entry name" value="GTP_EFTU"/>
    <property type="match status" value="1"/>
</dbReference>
<dbReference type="Pfam" id="PF03144">
    <property type="entry name" value="GTP_EFTU_D2"/>
    <property type="match status" value="1"/>
</dbReference>
<dbReference type="Pfam" id="PF06421">
    <property type="entry name" value="LepA_C"/>
    <property type="match status" value="1"/>
</dbReference>
<dbReference type="PRINTS" id="PR00315">
    <property type="entry name" value="ELONGATNFCT"/>
</dbReference>
<dbReference type="SMART" id="SM00838">
    <property type="entry name" value="EFG_C"/>
    <property type="match status" value="1"/>
</dbReference>
<dbReference type="SUPFAM" id="SSF54980">
    <property type="entry name" value="EF-G C-terminal domain-like"/>
    <property type="match status" value="2"/>
</dbReference>
<dbReference type="SUPFAM" id="SSF52540">
    <property type="entry name" value="P-loop containing nucleoside triphosphate hydrolases"/>
    <property type="match status" value="1"/>
</dbReference>
<dbReference type="PROSITE" id="PS00301">
    <property type="entry name" value="G_TR_1"/>
    <property type="match status" value="1"/>
</dbReference>
<dbReference type="PROSITE" id="PS51722">
    <property type="entry name" value="G_TR_2"/>
    <property type="match status" value="1"/>
</dbReference>
<keyword id="KW-1003">Cell membrane</keyword>
<keyword id="KW-0342">GTP-binding</keyword>
<keyword id="KW-0378">Hydrolase</keyword>
<keyword id="KW-0472">Membrane</keyword>
<keyword id="KW-0547">Nucleotide-binding</keyword>
<keyword id="KW-0648">Protein biosynthesis</keyword>
<sequence>MNIEDLKKRQEKIRNFSIIAHIDHGKSTLADRILEKTETVSSREMQAQLLDSMDLERERGITIKLNAIELNYTAKDGETYIFHLIDTPGHVDFTYEVSRSLAACEGAILVVDAAQGIEAQTLANVYLALDNDLEILPVINKIDLPAADPERVRAEVEDVIGLDASEAVLASAKAGIGIEEILEQIVEKVPAPTGEVDAPLQALIFDSVYDAYRGVILQVRIVNGMVKPGDKIQMMSNGKTFDVTEVGIFTPKAVGRDFLATGDVGYIAASIKTVADTRVGDTITLANNPAIEPLHGYKQMNPMVFAGLYPIESNKYNDLREALEKLQLNDASLQFEPETSQALGFGFRCGFLGLLHMDVIQERLEREFNIDLIMTAPSVVYHVNTTDGEMLEVSNPSEFPDPTRVDSIEEPYVKAQIMVPQEFVGAVMELAQRKRGDFVTMDYIDDNRVNVIYQIPLAEIVFDFFDKLKSSTRGYASFDYEISEYRRSQLVKMDILLNGDKVDALSFIVHKEFAYERGKLIVDKLKKIIPRQQFEVPIQAAIGQKIVARSDIKALRKNVLAKCYGGDVSRKRKLLEKQKAGKKRMKAIGSVEVPQEAFLSVLSMDDDDKK</sequence>
<name>LEPA_STRA3</name>
<protein>
    <recommendedName>
        <fullName evidence="1">Elongation factor 4</fullName>
        <shortName evidence="1">EF-4</shortName>
        <ecNumber evidence="1">3.6.5.n1</ecNumber>
    </recommendedName>
    <alternativeName>
        <fullName evidence="1">Ribosomal back-translocase LepA</fullName>
    </alternativeName>
</protein>
<reference key="1">
    <citation type="journal article" date="2002" name="Mol. Microbiol.">
        <title>Genome sequence of Streptococcus agalactiae, a pathogen causing invasive neonatal disease.</title>
        <authorList>
            <person name="Glaser P."/>
            <person name="Rusniok C."/>
            <person name="Buchrieser C."/>
            <person name="Chevalier F."/>
            <person name="Frangeul L."/>
            <person name="Msadek T."/>
            <person name="Zouine M."/>
            <person name="Couve E."/>
            <person name="Lalioui L."/>
            <person name="Poyart C."/>
            <person name="Trieu-Cuot P."/>
            <person name="Kunst F."/>
        </authorList>
    </citation>
    <scope>NUCLEOTIDE SEQUENCE [LARGE SCALE GENOMIC DNA]</scope>
    <source>
        <strain>NEM316</strain>
    </source>
</reference>
<comment type="function">
    <text evidence="1">Required for accurate and efficient protein synthesis under certain stress conditions. May act as a fidelity factor of the translation reaction, by catalyzing a one-codon backward translocation of tRNAs on improperly translocated ribosomes. Back-translocation proceeds from a post-translocation (POST) complex to a pre-translocation (PRE) complex, thus giving elongation factor G a second chance to translocate the tRNAs correctly. Binds to ribosomes in a GTP-dependent manner.</text>
</comment>
<comment type="catalytic activity">
    <reaction evidence="1">
        <text>GTP + H2O = GDP + phosphate + H(+)</text>
        <dbReference type="Rhea" id="RHEA:19669"/>
        <dbReference type="ChEBI" id="CHEBI:15377"/>
        <dbReference type="ChEBI" id="CHEBI:15378"/>
        <dbReference type="ChEBI" id="CHEBI:37565"/>
        <dbReference type="ChEBI" id="CHEBI:43474"/>
        <dbReference type="ChEBI" id="CHEBI:58189"/>
        <dbReference type="EC" id="3.6.5.n1"/>
    </reaction>
</comment>
<comment type="subcellular location">
    <subcellularLocation>
        <location evidence="1">Cell membrane</location>
        <topology evidence="1">Peripheral membrane protein</topology>
        <orientation evidence="1">Cytoplasmic side</orientation>
    </subcellularLocation>
</comment>
<comment type="similarity">
    <text evidence="1">Belongs to the TRAFAC class translation factor GTPase superfamily. Classic translation factor GTPase family. LepA subfamily.</text>
</comment>